<comment type="function">
    <text evidence="2">Toxin that specifically inhibits tetrodotoxin-sensitive voltage-gated sodium channels (Nav) (IC(50) of =about 9 nM). In vivo, insects injected with this toxin showed signs of neurotoxicity including twitching, paralysis, and body contraction.</text>
</comment>
<comment type="subcellular location">
    <subcellularLocation>
        <location evidence="2">Secreted</location>
    </subcellularLocation>
</comment>
<comment type="tissue specificity">
    <text evidence="5">Expressed by the venom gland.</text>
</comment>
<comment type="PTM">
    <text evidence="2">Contains 2 disulfide bonds.</text>
</comment>
<comment type="mass spectrometry"/>
<comment type="toxic dose">
    <text evidence="2">The LD(50) ranges from 0.25 mg/kg in adult blowflies to 23.7 mg/kg in cockroaches;.</text>
</comment>
<comment type="similarity">
    <text evidence="4">Belongs to the scoloptoxin-03 family.</text>
</comment>
<dbReference type="SMR" id="P0DMD2"/>
<dbReference type="GO" id="GO:0005576">
    <property type="term" value="C:extracellular region"/>
    <property type="evidence" value="ECO:0007669"/>
    <property type="project" value="UniProtKB-SubCell"/>
</dbReference>
<dbReference type="GO" id="GO:0017080">
    <property type="term" value="F:sodium channel regulator activity"/>
    <property type="evidence" value="ECO:0007669"/>
    <property type="project" value="UniProtKB-KW"/>
</dbReference>
<dbReference type="GO" id="GO:0090729">
    <property type="term" value="F:toxin activity"/>
    <property type="evidence" value="ECO:0007669"/>
    <property type="project" value="UniProtKB-KW"/>
</dbReference>
<dbReference type="Gene3D" id="1.10.60.50">
    <property type="match status" value="1"/>
</dbReference>
<accession>P0DMD2</accession>
<evidence type="ECO:0000250" key="1">
    <source>
        <dbReference type="UniProtKB" id="P0DL36"/>
    </source>
</evidence>
<evidence type="ECO:0000269" key="2">
    <source>
    </source>
</evidence>
<evidence type="ECO:0000303" key="3">
    <source>
    </source>
</evidence>
<evidence type="ECO:0000305" key="4"/>
<evidence type="ECO:0000305" key="5">
    <source>
    </source>
</evidence>
<sequence>ADNKFENSLRREIACGQCRDKVKCDPYFYHCG</sequence>
<protein>
    <recommendedName>
        <fullName evidence="4">Mu-scoloptoxin(03)-Ssm3a</fullName>
        <shortName evidence="4">Mu-SLPTX(03)-Ssm3a</shortName>
    </recommendedName>
    <alternativeName>
        <fullName evidence="3">Mu-scoloptoxin-Ssm1a</fullName>
        <shortName evidence="3">Mu-SLPTX-Ssm1a</shortName>
    </alternativeName>
</protein>
<reference key="1">
    <citation type="journal article" date="2012" name="Mol. Cell. Proteomics">
        <title>Chemical punch packed in venoms makes centipedes excellent predators.</title>
        <authorList>
            <person name="Yang S."/>
            <person name="Liu Z."/>
            <person name="Xiao Y."/>
            <person name="Li Y."/>
            <person name="Rong M."/>
            <person name="Liang S."/>
            <person name="Zhang Z."/>
            <person name="Yu H."/>
            <person name="King G.F."/>
            <person name="Lai R."/>
        </authorList>
    </citation>
    <scope>PROTEIN SEQUENCE</scope>
    <scope>FUNCTION</scope>
    <scope>BIOASSAY</scope>
    <scope>DISULFIDE BONDS</scope>
    <scope>LETHAL DOSES</scope>
    <scope>MASS SPECTROMETRY</scope>
    <scope>SUBCELLULAR LOCATION</scope>
    <source>
        <tissue>Venom</tissue>
    </source>
</reference>
<name>TX33A_SCOMU</name>
<organism>
    <name type="scientific">Scolopendra mutilans</name>
    <name type="common">Chinese red-headed centipede</name>
    <name type="synonym">Scolopendra subspinipes mutilans</name>
    <dbReference type="NCBI Taxonomy" id="2836329"/>
    <lineage>
        <taxon>Eukaryota</taxon>
        <taxon>Metazoa</taxon>
        <taxon>Ecdysozoa</taxon>
        <taxon>Arthropoda</taxon>
        <taxon>Myriapoda</taxon>
        <taxon>Chilopoda</taxon>
        <taxon>Pleurostigmophora</taxon>
        <taxon>Scolopendromorpha</taxon>
        <taxon>Scolopendridae</taxon>
        <taxon>Scolopendra</taxon>
    </lineage>
</organism>
<proteinExistence type="evidence at protein level"/>
<keyword id="KW-0903">Direct protein sequencing</keyword>
<keyword id="KW-1015">Disulfide bond</keyword>
<keyword id="KW-0872">Ion channel impairing toxin</keyword>
<keyword id="KW-0528">Neurotoxin</keyword>
<keyword id="KW-0964">Secreted</keyword>
<keyword id="KW-0800">Toxin</keyword>
<keyword id="KW-0738">Voltage-gated sodium channel impairing toxin</keyword>
<feature type="chain" id="PRO_0000425468" description="Mu-scoloptoxin(03)-Ssm3a" evidence="2">
    <location>
        <begin position="1"/>
        <end position="32"/>
    </location>
</feature>
<feature type="disulfide bond" evidence="1">
    <location>
        <begin position="15"/>
        <end position="31"/>
    </location>
</feature>
<feature type="disulfide bond" evidence="4">
    <location>
        <begin position="18"/>
        <end position="24"/>
    </location>
</feature>